<organism>
    <name type="scientific">Clostridium perfringens (strain 13 / Type A)</name>
    <dbReference type="NCBI Taxonomy" id="195102"/>
    <lineage>
        <taxon>Bacteria</taxon>
        <taxon>Bacillati</taxon>
        <taxon>Bacillota</taxon>
        <taxon>Clostridia</taxon>
        <taxon>Eubacteriales</taxon>
        <taxon>Clostridiaceae</taxon>
        <taxon>Clostridium</taxon>
    </lineage>
</organism>
<keyword id="KW-0472">Membrane</keyword>
<keyword id="KW-0488">Methylation</keyword>
<keyword id="KW-1185">Reference proteome</keyword>
<keyword id="KW-0812">Transmembrane</keyword>
<keyword id="KW-1133">Transmembrane helix</keyword>
<gene>
    <name type="primary">ppdA</name>
    <name type="ordered locus">CPE2288</name>
</gene>
<protein>
    <recommendedName>
        <fullName>Prepilin peptidase-dependent protein A</fullName>
    </recommendedName>
</protein>
<proteinExistence type="inferred from homology"/>
<accession>P33555</accession>
<feature type="propeptide" id="PRO_0000024272" evidence="1">
    <location>
        <begin position="1"/>
        <end position="23"/>
    </location>
</feature>
<feature type="chain" id="PRO_0000024273" description="Prepilin peptidase-dependent protein A">
    <location>
        <begin position="24"/>
        <end position="140"/>
    </location>
</feature>
<feature type="transmembrane region" description="Helical" evidence="2">
    <location>
        <begin position="24"/>
        <end position="44"/>
    </location>
</feature>
<feature type="modified residue" description="N-methylphenylalanine" evidence="3">
    <location>
        <position position="24"/>
    </location>
</feature>
<feature type="sequence conflict" description="In Ref. 1." evidence="4" ref="1">
    <original>Y</original>
    <variation>S</variation>
    <location>
        <position position="49"/>
    </location>
</feature>
<feature type="sequence conflict" description="In Ref. 1." evidence="4" ref="1">
    <original>V</original>
    <variation>I</variation>
    <location>
        <position position="83"/>
    </location>
</feature>
<feature type="sequence conflict" description="In Ref. 1." evidence="4" ref="1">
    <original>D</original>
    <variation>E</variation>
    <location>
        <position position="123"/>
    </location>
</feature>
<sequence length="140" mass="14931">MLLLKASAICGKGNEGKRNKKGGFTLIELTVVLAIMAIILMVIAPNFSYVKDSAKAKVDKQNCAAIERSVEMLLAEDAISSSVTNIKITSSNGNVQISGISDDTGKSKLQDLLEDLDKPQSGDSYNVDIENGRKVTVSIV</sequence>
<evidence type="ECO:0000250" key="1"/>
<evidence type="ECO:0000255" key="2"/>
<evidence type="ECO:0000255" key="3">
    <source>
        <dbReference type="PROSITE-ProRule" id="PRU01070"/>
    </source>
</evidence>
<evidence type="ECO:0000305" key="4"/>
<reference key="1">
    <citation type="journal article" date="1992" name="Biochim. Biophys. Acta">
        <title>Cloning of HSP60 (GroEL) operon from Clostridium perfringens using a polymerase chain reaction based approach.</title>
        <authorList>
            <person name="Rusanganwa E."/>
            <person name="Singh B."/>
            <person name="Gupta R.S."/>
        </authorList>
    </citation>
    <scope>NUCLEOTIDE SEQUENCE [GENOMIC DNA]</scope>
</reference>
<reference key="2">
    <citation type="journal article" date="2002" name="Proc. Natl. Acad. Sci. U.S.A.">
        <title>Complete genome sequence of Clostridium perfringens, an anaerobic flesh-eater.</title>
        <authorList>
            <person name="Shimizu T."/>
            <person name="Ohtani K."/>
            <person name="Hirakawa H."/>
            <person name="Ohshima K."/>
            <person name="Yamashita A."/>
            <person name="Shiba T."/>
            <person name="Ogasawara N."/>
            <person name="Hattori M."/>
            <person name="Kuhara S."/>
            <person name="Hayashi H."/>
        </authorList>
    </citation>
    <scope>NUCLEOTIDE SEQUENCE [LARGE SCALE GENOMIC DNA]</scope>
    <source>
        <strain>13 / Type A</strain>
    </source>
</reference>
<reference key="3">
    <citation type="journal article" date="1993" name="Mol. Microbiol.">
        <title>Common components in the assembly of type 4 fimbriae, DNA transfer systems, filamentous phage and protein-secretion apparatus: a general system for the formation of surface-associated protein complexes.</title>
        <authorList>
            <person name="Hobbs M."/>
            <person name="Mattick J.S."/>
        </authorList>
    </citation>
    <scope>IDENTIFICATION</scope>
</reference>
<comment type="function">
    <text>Not yet known.</text>
</comment>
<comment type="subcellular location">
    <subcellularLocation>
        <location evidence="2">Membrane</location>
        <topology evidence="2">Single-pass membrane protein</topology>
    </subcellularLocation>
</comment>
<name>PPDA_CLOPE</name>
<dbReference type="EMBL" id="X62914">
    <property type="status" value="NOT_ANNOTATED_CDS"/>
    <property type="molecule type" value="Genomic_DNA"/>
</dbReference>
<dbReference type="EMBL" id="BA000016">
    <property type="protein sequence ID" value="BAB81994.1"/>
    <property type="molecule type" value="Genomic_DNA"/>
</dbReference>
<dbReference type="RefSeq" id="WP_011010863.1">
    <property type="nucleotide sequence ID" value="NC_003366.1"/>
</dbReference>
<dbReference type="SMR" id="P33555"/>
<dbReference type="STRING" id="195102.gene:10491596"/>
<dbReference type="KEGG" id="cpe:CPE2288"/>
<dbReference type="HOGENOM" id="CLU_1831676_0_0_9"/>
<dbReference type="Proteomes" id="UP000000818">
    <property type="component" value="Chromosome"/>
</dbReference>
<dbReference type="GO" id="GO:0016020">
    <property type="term" value="C:membrane"/>
    <property type="evidence" value="ECO:0007669"/>
    <property type="project" value="UniProtKB-SubCell"/>
</dbReference>
<dbReference type="Gene3D" id="3.30.700.10">
    <property type="entry name" value="Glycoprotein, Type 4 Pilin"/>
    <property type="match status" value="1"/>
</dbReference>
<dbReference type="InterPro" id="IPR012902">
    <property type="entry name" value="N_methyl_site"/>
</dbReference>
<dbReference type="InterPro" id="IPR045584">
    <property type="entry name" value="Pilin-like"/>
</dbReference>
<dbReference type="NCBIfam" id="TIGR02532">
    <property type="entry name" value="IV_pilin_GFxxxE"/>
    <property type="match status" value="1"/>
</dbReference>
<dbReference type="Pfam" id="PF07963">
    <property type="entry name" value="N_methyl"/>
    <property type="match status" value="1"/>
</dbReference>
<dbReference type="SUPFAM" id="SSF54523">
    <property type="entry name" value="Pili subunits"/>
    <property type="match status" value="1"/>
</dbReference>
<dbReference type="PROSITE" id="PS00409">
    <property type="entry name" value="PROKAR_NTER_METHYL"/>
    <property type="match status" value="1"/>
</dbReference>